<protein>
    <recommendedName>
        <fullName evidence="1">RNA polymerase sigma factor SigA</fullName>
    </recommendedName>
    <alternativeName>
        <fullName>Major vegetative sigma factor</fullName>
    </alternativeName>
    <alternativeName>
        <fullName>Sigma-A</fullName>
    </alternativeName>
</protein>
<keyword id="KW-0963">Cytoplasm</keyword>
<keyword id="KW-0238">DNA-binding</keyword>
<keyword id="KW-1185">Reference proteome</keyword>
<keyword id="KW-0731">Sigma factor</keyword>
<keyword id="KW-0804">Transcription</keyword>
<keyword id="KW-0805">Transcription regulation</keyword>
<name>SIGA_CLOAB</name>
<sequence>MKNKTEVKNGGEKKNSKKVSKEESAKEKNEKMKIVKNLIDKGKKSGSLTYKEIMDELQEVDLGPEQIEKIYEVLESVGVDVVGDMHEIEVEEEDLDLTIPEGIAIDDPVRMYLKEIGKVPLLSPEEEIDLAQRIKNGDRSARKKLAEANLRLVVSIAKRYVGRGMLFLDLIQEGNLGLIKAVEKFDFKKGFKFSTYATWWIRQAITRAIADQARTIRIPVHMVETINKLIRVSRQLLQELGREPQPEEIAKIMDMPVDKVREIMKIAQEPVSLETPIGEEEDSHLGDFIPDDEAPAPADAAAFRMLKEQLLKILNTLTPREEKVLRLRFGLDDGRARTLEEVGKEFNVTRERIRQIEAKALRKLRHPSRSKKLKDYLD</sequence>
<reference key="1">
    <citation type="journal article" date="1994" name="J. Bacteriol.">
        <title>Sporulation and primary sigma factor homologous genes in Clostridium acetobutylicum.</title>
        <authorList>
            <person name="Sauer U."/>
            <person name="Treuner A."/>
            <person name="Buchholz M."/>
            <person name="Santangelo J.D."/>
            <person name="Durre P."/>
        </authorList>
    </citation>
    <scope>NUCLEOTIDE SEQUENCE [GENOMIC DNA]</scope>
    <source>
        <strain>ATCC 824 / DSM 792 / JCM 1419 / IAM 19013 / LMG 5710 / NBRC 13948 / NRRL B-527 / VKM B-1787 / 2291 / W</strain>
    </source>
</reference>
<reference key="2">
    <citation type="journal article" date="2001" name="J. Bacteriol.">
        <title>Genome sequence and comparative analysis of the solvent-producing bacterium Clostridium acetobutylicum.</title>
        <authorList>
            <person name="Noelling J."/>
            <person name="Breton G."/>
            <person name="Omelchenko M.V."/>
            <person name="Makarova K.S."/>
            <person name="Zeng Q."/>
            <person name="Gibson R."/>
            <person name="Lee H.M."/>
            <person name="Dubois J."/>
            <person name="Qiu D."/>
            <person name="Hitti J."/>
            <person name="Wolf Y.I."/>
            <person name="Tatusov R.L."/>
            <person name="Sabathe F."/>
            <person name="Doucette-Stamm L.A."/>
            <person name="Soucaille P."/>
            <person name="Daly M.J."/>
            <person name="Bennett G.N."/>
            <person name="Koonin E.V."/>
            <person name="Smith D.R."/>
        </authorList>
    </citation>
    <scope>NUCLEOTIDE SEQUENCE [LARGE SCALE GENOMIC DNA]</scope>
    <source>
        <strain>ATCC 824 / DSM 792 / JCM 1419 / IAM 19013 / LMG 5710 / NBRC 13948 / NRRL B-527 / VKM B-1787 / 2291 / W</strain>
    </source>
</reference>
<evidence type="ECO:0000255" key="1">
    <source>
        <dbReference type="HAMAP-Rule" id="MF_00963"/>
    </source>
</evidence>
<evidence type="ECO:0000256" key="2">
    <source>
        <dbReference type="SAM" id="MobiDB-lite"/>
    </source>
</evidence>
<proteinExistence type="inferred from homology"/>
<gene>
    <name evidence="1" type="primary">sigA</name>
    <name type="synonym">rpoD</name>
    <name type="ordered locus">CA_C1300</name>
</gene>
<feature type="chain" id="PRO_0000093884" description="RNA polymerase sigma factor SigA">
    <location>
        <begin position="1"/>
        <end position="378"/>
    </location>
</feature>
<feature type="DNA-binding region" description="H-T-H motif" evidence="1">
    <location>
        <begin position="339"/>
        <end position="358"/>
    </location>
</feature>
<feature type="region of interest" description="Disordered" evidence="2">
    <location>
        <begin position="1"/>
        <end position="29"/>
    </location>
</feature>
<feature type="region of interest" description="Sigma-70 factor domain-2" evidence="1">
    <location>
        <begin position="145"/>
        <end position="215"/>
    </location>
</feature>
<feature type="region of interest" description="Sigma-70 factor domain-3" evidence="1">
    <location>
        <begin position="224"/>
        <end position="300"/>
    </location>
</feature>
<feature type="region of interest" description="Sigma-70 factor domain-4" evidence="1">
    <location>
        <begin position="313"/>
        <end position="366"/>
    </location>
</feature>
<feature type="short sequence motif" description="Interaction with polymerase core subunit RpoC">
    <location>
        <begin position="169"/>
        <end position="172"/>
    </location>
</feature>
<comment type="function">
    <text evidence="1">Sigma factors are initiation factors that promote the attachment of RNA polymerase to specific initiation sites and are then released. This sigma factor is the primary sigma factor during exponential growth.</text>
</comment>
<comment type="subunit">
    <text evidence="1">Interacts transiently with the RNA polymerase catalytic core.</text>
</comment>
<comment type="subcellular location">
    <subcellularLocation>
        <location evidence="1">Cytoplasm</location>
    </subcellularLocation>
</comment>
<comment type="similarity">
    <text evidence="1">Belongs to the sigma-70 factor family. RpoD/SigA subfamily.</text>
</comment>
<dbReference type="EMBL" id="Z23080">
    <property type="protein sequence ID" value="CAA80625.1"/>
    <property type="molecule type" value="Genomic_DNA"/>
</dbReference>
<dbReference type="EMBL" id="AE001437">
    <property type="protein sequence ID" value="AAK79271.1"/>
    <property type="molecule type" value="Genomic_DNA"/>
</dbReference>
<dbReference type="PIR" id="D97060">
    <property type="entry name" value="D97060"/>
</dbReference>
<dbReference type="PIR" id="I40610">
    <property type="entry name" value="I40610"/>
</dbReference>
<dbReference type="RefSeq" id="NP_347931.1">
    <property type="nucleotide sequence ID" value="NC_003030.1"/>
</dbReference>
<dbReference type="RefSeq" id="WP_010964612.1">
    <property type="nucleotide sequence ID" value="NC_003030.1"/>
</dbReference>
<dbReference type="SMR" id="P33656"/>
<dbReference type="STRING" id="272562.CA_C1300"/>
<dbReference type="GeneID" id="44997806"/>
<dbReference type="KEGG" id="cac:CA_C1300"/>
<dbReference type="PATRIC" id="fig|272562.8.peg.1501"/>
<dbReference type="eggNOG" id="COG0568">
    <property type="taxonomic scope" value="Bacteria"/>
</dbReference>
<dbReference type="HOGENOM" id="CLU_014793_3_3_9"/>
<dbReference type="OrthoDB" id="9809557at2"/>
<dbReference type="Proteomes" id="UP000000814">
    <property type="component" value="Chromosome"/>
</dbReference>
<dbReference type="GO" id="GO:0005737">
    <property type="term" value="C:cytoplasm"/>
    <property type="evidence" value="ECO:0007669"/>
    <property type="project" value="UniProtKB-SubCell"/>
</dbReference>
<dbReference type="GO" id="GO:0003677">
    <property type="term" value="F:DNA binding"/>
    <property type="evidence" value="ECO:0007669"/>
    <property type="project" value="UniProtKB-UniRule"/>
</dbReference>
<dbReference type="GO" id="GO:0016987">
    <property type="term" value="F:sigma factor activity"/>
    <property type="evidence" value="ECO:0007669"/>
    <property type="project" value="UniProtKB-UniRule"/>
</dbReference>
<dbReference type="GO" id="GO:0006352">
    <property type="term" value="P:DNA-templated transcription initiation"/>
    <property type="evidence" value="ECO:0007669"/>
    <property type="project" value="UniProtKB-UniRule"/>
</dbReference>
<dbReference type="CDD" id="cd06171">
    <property type="entry name" value="Sigma70_r4"/>
    <property type="match status" value="1"/>
</dbReference>
<dbReference type="FunFam" id="1.10.10.10:FF:000002">
    <property type="entry name" value="RNA polymerase sigma factor SigA"/>
    <property type="match status" value="1"/>
</dbReference>
<dbReference type="FunFam" id="1.10.10.10:FF:000004">
    <property type="entry name" value="RNA polymerase sigma factor SigA"/>
    <property type="match status" value="1"/>
</dbReference>
<dbReference type="FunFam" id="1.10.601.10:FF:000001">
    <property type="entry name" value="RNA polymerase sigma factor SigA"/>
    <property type="match status" value="1"/>
</dbReference>
<dbReference type="Gene3D" id="1.10.601.10">
    <property type="entry name" value="RNA Polymerase Primary Sigma Factor"/>
    <property type="match status" value="2"/>
</dbReference>
<dbReference type="Gene3D" id="1.10.220.120">
    <property type="entry name" value="Sigma-70 factor, region 1.1"/>
    <property type="match status" value="1"/>
</dbReference>
<dbReference type="Gene3D" id="1.10.10.10">
    <property type="entry name" value="Winged helix-like DNA-binding domain superfamily/Winged helix DNA-binding domain"/>
    <property type="match status" value="2"/>
</dbReference>
<dbReference type="HAMAP" id="MF_00963">
    <property type="entry name" value="Sigma70_RpoD_SigA"/>
    <property type="match status" value="1"/>
</dbReference>
<dbReference type="InterPro" id="IPR014284">
    <property type="entry name" value="RNA_pol_sigma-70_dom"/>
</dbReference>
<dbReference type="InterPro" id="IPR000943">
    <property type="entry name" value="RNA_pol_sigma70"/>
</dbReference>
<dbReference type="InterPro" id="IPR009042">
    <property type="entry name" value="RNA_pol_sigma70_r1_2"/>
</dbReference>
<dbReference type="InterPro" id="IPR007627">
    <property type="entry name" value="RNA_pol_sigma70_r2"/>
</dbReference>
<dbReference type="InterPro" id="IPR007624">
    <property type="entry name" value="RNA_pol_sigma70_r3"/>
</dbReference>
<dbReference type="InterPro" id="IPR007630">
    <property type="entry name" value="RNA_pol_sigma70_r4"/>
</dbReference>
<dbReference type="InterPro" id="IPR007127">
    <property type="entry name" value="RNA_pol_sigma_70_r1_1"/>
</dbReference>
<dbReference type="InterPro" id="IPR042189">
    <property type="entry name" value="RNA_pol_sigma_70_r1_1_sf"/>
</dbReference>
<dbReference type="InterPro" id="IPR013325">
    <property type="entry name" value="RNA_pol_sigma_r2"/>
</dbReference>
<dbReference type="InterPro" id="IPR013324">
    <property type="entry name" value="RNA_pol_sigma_r3/r4-like"/>
</dbReference>
<dbReference type="InterPro" id="IPR012760">
    <property type="entry name" value="RNA_pol_sigma_RpoD_C"/>
</dbReference>
<dbReference type="InterPro" id="IPR050239">
    <property type="entry name" value="Sigma-70_RNA_pol_init_factors"/>
</dbReference>
<dbReference type="InterPro" id="IPR028630">
    <property type="entry name" value="Sigma70_RpoD"/>
</dbReference>
<dbReference type="InterPro" id="IPR036388">
    <property type="entry name" value="WH-like_DNA-bd_sf"/>
</dbReference>
<dbReference type="NCBIfam" id="NF006666">
    <property type="entry name" value="PRK09210.1"/>
    <property type="match status" value="1"/>
</dbReference>
<dbReference type="NCBIfam" id="TIGR02393">
    <property type="entry name" value="RpoD_Cterm"/>
    <property type="match status" value="1"/>
</dbReference>
<dbReference type="NCBIfam" id="TIGR02937">
    <property type="entry name" value="sigma70-ECF"/>
    <property type="match status" value="1"/>
</dbReference>
<dbReference type="PANTHER" id="PTHR30603">
    <property type="entry name" value="RNA POLYMERASE SIGMA FACTOR RPO"/>
    <property type="match status" value="1"/>
</dbReference>
<dbReference type="PANTHER" id="PTHR30603:SF60">
    <property type="entry name" value="RNA POLYMERASE SIGMA FACTOR RPOD"/>
    <property type="match status" value="1"/>
</dbReference>
<dbReference type="Pfam" id="PF03979">
    <property type="entry name" value="Sigma70_r1_1"/>
    <property type="match status" value="1"/>
</dbReference>
<dbReference type="Pfam" id="PF00140">
    <property type="entry name" value="Sigma70_r1_2"/>
    <property type="match status" value="1"/>
</dbReference>
<dbReference type="Pfam" id="PF04542">
    <property type="entry name" value="Sigma70_r2"/>
    <property type="match status" value="1"/>
</dbReference>
<dbReference type="Pfam" id="PF04539">
    <property type="entry name" value="Sigma70_r3"/>
    <property type="match status" value="1"/>
</dbReference>
<dbReference type="Pfam" id="PF04545">
    <property type="entry name" value="Sigma70_r4"/>
    <property type="match status" value="1"/>
</dbReference>
<dbReference type="PRINTS" id="PR00046">
    <property type="entry name" value="SIGMA70FCT"/>
</dbReference>
<dbReference type="SUPFAM" id="SSF88946">
    <property type="entry name" value="Sigma2 domain of RNA polymerase sigma factors"/>
    <property type="match status" value="1"/>
</dbReference>
<dbReference type="SUPFAM" id="SSF88659">
    <property type="entry name" value="Sigma3 and sigma4 domains of RNA polymerase sigma factors"/>
    <property type="match status" value="2"/>
</dbReference>
<dbReference type="PROSITE" id="PS00715">
    <property type="entry name" value="SIGMA70_1"/>
    <property type="match status" value="1"/>
</dbReference>
<dbReference type="PROSITE" id="PS00716">
    <property type="entry name" value="SIGMA70_2"/>
    <property type="match status" value="1"/>
</dbReference>
<organism>
    <name type="scientific">Clostridium acetobutylicum (strain ATCC 824 / DSM 792 / JCM 1419 / IAM 19013 / LMG 5710 / NBRC 13948 / NRRL B-527 / VKM B-1787 / 2291 / W)</name>
    <dbReference type="NCBI Taxonomy" id="272562"/>
    <lineage>
        <taxon>Bacteria</taxon>
        <taxon>Bacillati</taxon>
        <taxon>Bacillota</taxon>
        <taxon>Clostridia</taxon>
        <taxon>Eubacteriales</taxon>
        <taxon>Clostridiaceae</taxon>
        <taxon>Clostridium</taxon>
    </lineage>
</organism>
<accession>P33656</accession>